<name>BHL1_BOTFB</name>
<organism>
    <name type="scientific">Botryotinia fuckeliana (strain B05.10)</name>
    <name type="common">Noble rot fungus</name>
    <name type="synonym">Botrytis cinerea</name>
    <dbReference type="NCBI Taxonomy" id="332648"/>
    <lineage>
        <taxon>Eukaryota</taxon>
        <taxon>Fungi</taxon>
        <taxon>Dikarya</taxon>
        <taxon>Ascomycota</taxon>
        <taxon>Pezizomycotina</taxon>
        <taxon>Leotiomycetes</taxon>
        <taxon>Helotiales</taxon>
        <taxon>Sclerotiniaceae</taxon>
        <taxon>Botrytis</taxon>
    </lineage>
</organism>
<comment type="function">
    <text evidence="4 6">Aerial growth, conidiation, and dispersal of filamentous fungi in the environment rely upon a capability of their secreting small amphipathic proteins called hydrophobins (HPBs) with low sequence identity. Class I can self-assemble into an outermost layer of rodlet bundles on aerial cell surfaces, conferring cellular hydrophobicity that supports fungal growth, development and dispersal; whereas Class II form highly ordered films at water-air interfaces through intermolecular interactions but contribute nothing to the rodlet structure (Probable). In Botryotinia fuckeliana, hydrophobins are not involved in conferring surface hydrophobicity to conidia and aerial hyphae and their function in sclerotia and fruiting bodies remains to be investigated (PubMed:21232149).</text>
</comment>
<comment type="subcellular location">
    <subcellularLocation>
        <location evidence="6">Secreted</location>
    </subcellularLocation>
    <subcellularLocation>
        <location evidence="6">Secreted</location>
        <location evidence="6">Cell wall</location>
    </subcellularLocation>
</comment>
<comment type="disruption phenotype">
    <text evidence="4">Does not seem to affect germination and growth, formation of sclerotia, ability to penetrate and infect host tissue, nor spore and mycelium surface properties.</text>
</comment>
<accession>A0A384JJH8</accession>
<feature type="signal peptide" evidence="2">
    <location>
        <begin position="1"/>
        <end position="20"/>
    </location>
</feature>
<feature type="chain" id="PRO_5036073130" description="Hydrophobin-like protein 1">
    <location>
        <begin position="21"/>
        <end position="145"/>
    </location>
</feature>
<feature type="glycosylation site" description="N-linked (GlcNAc...) asparagine" evidence="3">
    <location>
        <position position="36"/>
    </location>
</feature>
<feature type="disulfide bond" evidence="1">
    <location>
        <begin position="61"/>
        <end position="121"/>
    </location>
</feature>
<feature type="disulfide bond" evidence="1">
    <location>
        <begin position="71"/>
        <end position="113"/>
    </location>
</feature>
<feature type="disulfide bond" evidence="1">
    <location>
        <begin position="72"/>
        <end position="104"/>
    </location>
</feature>
<feature type="disulfide bond" evidence="1">
    <location>
        <begin position="122"/>
        <end position="139"/>
    </location>
</feature>
<dbReference type="EMBL" id="CP009810">
    <property type="protein sequence ID" value="ATZ50547.1"/>
    <property type="molecule type" value="Genomic_DNA"/>
</dbReference>
<dbReference type="EMBL" id="CP009810">
    <property type="protein sequence ID" value="ATZ50548.1"/>
    <property type="molecule type" value="Genomic_DNA"/>
</dbReference>
<dbReference type="RefSeq" id="XP_001560171.1">
    <property type="nucleotide sequence ID" value="XM_001560121.2"/>
</dbReference>
<dbReference type="RefSeq" id="XP_024549081.1">
    <property type="nucleotide sequence ID" value="XM_024693295.1"/>
</dbReference>
<dbReference type="EnsemblFungi" id="Bcin06g00450.1">
    <property type="protein sequence ID" value="Bcin06p00450.1"/>
    <property type="gene ID" value="Bcin06g00450"/>
</dbReference>
<dbReference type="EnsemblFungi" id="Bcin06g00450.2">
    <property type="protein sequence ID" value="Bcin06p00450.2"/>
    <property type="gene ID" value="Bcin06g00450"/>
</dbReference>
<dbReference type="GeneID" id="5440847"/>
<dbReference type="VEuPathDB" id="FungiDB:Bcin06g00450"/>
<dbReference type="OMA" id="VCCQVTT"/>
<dbReference type="OrthoDB" id="5189319at2759"/>
<dbReference type="Proteomes" id="UP000001798">
    <property type="component" value="Chromosome bcin06"/>
</dbReference>
<gene>
    <name evidence="5" type="primary">Bhl1</name>
    <name type="ORF">BCIN_06g00450</name>
</gene>
<reference key="1">
    <citation type="journal article" date="2011" name="PLoS Genet.">
        <title>Genomic analysis of the necrotrophic fungal pathogens Sclerotinia sclerotiorum and Botrytis cinerea.</title>
        <authorList>
            <person name="Amselem J."/>
            <person name="Cuomo C.A."/>
            <person name="van Kan J.A.L."/>
            <person name="Viaud M."/>
            <person name="Benito E.P."/>
            <person name="Couloux A."/>
            <person name="Coutinho P.M."/>
            <person name="de Vries R.P."/>
            <person name="Dyer P.S."/>
            <person name="Fillinger S."/>
            <person name="Fournier E."/>
            <person name="Gout L."/>
            <person name="Hahn M."/>
            <person name="Kohn L."/>
            <person name="Lapalu N."/>
            <person name="Plummer K.M."/>
            <person name="Pradier J.-M."/>
            <person name="Quevillon E."/>
            <person name="Sharon A."/>
            <person name="Simon A."/>
            <person name="ten Have A."/>
            <person name="Tudzynski B."/>
            <person name="Tudzynski P."/>
            <person name="Wincker P."/>
            <person name="Andrew M."/>
            <person name="Anthouard V."/>
            <person name="Beever R.E."/>
            <person name="Beffa R."/>
            <person name="Benoit I."/>
            <person name="Bouzid O."/>
            <person name="Brault B."/>
            <person name="Chen Z."/>
            <person name="Choquer M."/>
            <person name="Collemare J."/>
            <person name="Cotton P."/>
            <person name="Danchin E.G."/>
            <person name="Da Silva C."/>
            <person name="Gautier A."/>
            <person name="Giraud C."/>
            <person name="Giraud T."/>
            <person name="Gonzalez C."/>
            <person name="Grossetete S."/>
            <person name="Gueldener U."/>
            <person name="Henrissat B."/>
            <person name="Howlett B.J."/>
            <person name="Kodira C."/>
            <person name="Kretschmer M."/>
            <person name="Lappartient A."/>
            <person name="Leroch M."/>
            <person name="Levis C."/>
            <person name="Mauceli E."/>
            <person name="Neuveglise C."/>
            <person name="Oeser B."/>
            <person name="Pearson M."/>
            <person name="Poulain J."/>
            <person name="Poussereau N."/>
            <person name="Quesneville H."/>
            <person name="Rascle C."/>
            <person name="Schumacher J."/>
            <person name="Segurens B."/>
            <person name="Sexton A."/>
            <person name="Silva E."/>
            <person name="Sirven C."/>
            <person name="Soanes D.M."/>
            <person name="Talbot N.J."/>
            <person name="Templeton M."/>
            <person name="Yandava C."/>
            <person name="Yarden O."/>
            <person name="Zeng Q."/>
            <person name="Rollins J.A."/>
            <person name="Lebrun M.-H."/>
            <person name="Dickman M."/>
        </authorList>
    </citation>
    <scope>NUCLEOTIDE SEQUENCE [LARGE SCALE GENOMIC DNA]</scope>
    <source>
        <strain>B05.10</strain>
    </source>
</reference>
<reference key="2">
    <citation type="journal article" date="2012" name="Eukaryot. Cell">
        <title>Genome update of Botrytis cinerea strains B05.10 and T4.</title>
        <authorList>
            <person name="Staats M."/>
            <person name="van Kan J.A.L."/>
        </authorList>
    </citation>
    <scope>NUCLEOTIDE SEQUENCE [LARGE SCALE GENOMIC DNA]</scope>
    <source>
        <strain>B05.10</strain>
    </source>
</reference>
<reference key="3">
    <citation type="journal article" date="2017" name="Mol. Plant Pathol.">
        <title>A gapless genome sequence of the fungus Botrytis cinerea.</title>
        <authorList>
            <person name="van Kan J.A.L."/>
            <person name="Stassen J.H.M."/>
            <person name="Mosbach A."/>
            <person name="van der Lee T.A.J."/>
            <person name="Faino L."/>
            <person name="Farmer A.D."/>
            <person name="Papasotiriou D.G."/>
            <person name="Zhou S."/>
            <person name="Seidl M.F."/>
            <person name="Cottam E."/>
            <person name="Edel D."/>
            <person name="Hahn M."/>
            <person name="Schwartz D.C."/>
            <person name="Dietrich R.A."/>
            <person name="Widdison S."/>
            <person name="Scalliet G."/>
        </authorList>
    </citation>
    <scope>NUCLEOTIDE SEQUENCE [LARGE SCALE GENOMIC DNA]</scope>
    <source>
        <strain>B05.10</strain>
    </source>
</reference>
<reference key="4">
    <citation type="journal article" date="2011" name="BMC Microbiol.">
        <title>Lack of evidence for a role of hydrophobins in conferring surface hydrophobicity to conidia and hyphae of Botrytis cinerea.</title>
        <authorList>
            <person name="Mosbach A."/>
            <person name="Leroch M."/>
            <person name="Mendgen K.W."/>
            <person name="Hahn M."/>
        </authorList>
    </citation>
    <scope>FUNCTION</scope>
    <scope>DISRUPTION PHENOTYPE</scope>
</reference>
<protein>
    <recommendedName>
        <fullName evidence="5">Hydrophobin-like protein 1</fullName>
    </recommendedName>
</protein>
<sequence>MYLLQISISLLLLISTAATALPLSTPLIPLLDTLINITITASTLNSAPPTALTTTTHSLECADVNQGALVCCPSIVDGDQPVVVMAAKMFGFVLNGNSVNGVGCRTIYNGAYCPVLEHRLCCQVTDLMVLPLVSLAMWCHRAEEL</sequence>
<evidence type="ECO:0000250" key="1">
    <source>
        <dbReference type="UniProtKB" id="P52754"/>
    </source>
</evidence>
<evidence type="ECO:0000255" key="2"/>
<evidence type="ECO:0000255" key="3">
    <source>
        <dbReference type="PROSITE-ProRule" id="PRU00498"/>
    </source>
</evidence>
<evidence type="ECO:0000269" key="4">
    <source>
    </source>
</evidence>
<evidence type="ECO:0000303" key="5">
    <source>
    </source>
</evidence>
<evidence type="ECO:0000305" key="6">
    <source>
    </source>
</evidence>
<proteinExistence type="inferred from homology"/>
<keyword id="KW-0134">Cell wall</keyword>
<keyword id="KW-1015">Disulfide bond</keyword>
<keyword id="KW-0325">Glycoprotein</keyword>
<keyword id="KW-1185">Reference proteome</keyword>
<keyword id="KW-0964">Secreted</keyword>
<keyword id="KW-0732">Signal</keyword>